<sequence length="49" mass="5911">MRVNITLEHKESGERLYLTSKNKRNTPDRLQLKKYSPKLRKHVVFTEVK</sequence>
<feature type="chain" id="PRO_0000170249" description="Large ribosomal subunit protein bL33C">
    <location>
        <begin position="1"/>
        <end position="49"/>
    </location>
</feature>
<gene>
    <name evidence="1" type="primary">rpmG3</name>
    <name type="synonym">rpmG-3</name>
    <name type="ordered locus">spr1944</name>
</gene>
<protein>
    <recommendedName>
        <fullName evidence="1">Large ribosomal subunit protein bL33C</fullName>
    </recommendedName>
    <alternativeName>
        <fullName evidence="1">50S ribosomal protein L33 type 3</fullName>
    </alternativeName>
</protein>
<comment type="similarity">
    <text evidence="1">Belongs to the bacterial ribosomal protein bL33 family.</text>
</comment>
<keyword id="KW-1185">Reference proteome</keyword>
<keyword id="KW-0687">Ribonucleoprotein</keyword>
<keyword id="KW-0689">Ribosomal protein</keyword>
<name>RL333_STRR6</name>
<reference key="1">
    <citation type="journal article" date="2001" name="J. Bacteriol.">
        <title>Genome of the bacterium Streptococcus pneumoniae strain R6.</title>
        <authorList>
            <person name="Hoskins J."/>
            <person name="Alborn W.E. Jr."/>
            <person name="Arnold J."/>
            <person name="Blaszczak L.C."/>
            <person name="Burgett S."/>
            <person name="DeHoff B.S."/>
            <person name="Estrem S.T."/>
            <person name="Fritz L."/>
            <person name="Fu D.-J."/>
            <person name="Fuller W."/>
            <person name="Geringer C."/>
            <person name="Gilmour R."/>
            <person name="Glass J.S."/>
            <person name="Khoja H."/>
            <person name="Kraft A.R."/>
            <person name="Lagace R.E."/>
            <person name="LeBlanc D.J."/>
            <person name="Lee L.N."/>
            <person name="Lefkowitz E.J."/>
            <person name="Lu J."/>
            <person name="Matsushima P."/>
            <person name="McAhren S.M."/>
            <person name="McHenney M."/>
            <person name="McLeaster K."/>
            <person name="Mundy C.W."/>
            <person name="Nicas T.I."/>
            <person name="Norris F.H."/>
            <person name="O'Gara M."/>
            <person name="Peery R.B."/>
            <person name="Robertson G.T."/>
            <person name="Rockey P."/>
            <person name="Sun P.-M."/>
            <person name="Winkler M.E."/>
            <person name="Yang Y."/>
            <person name="Young-Bellido M."/>
            <person name="Zhao G."/>
            <person name="Zook C.A."/>
            <person name="Baltz R.H."/>
            <person name="Jaskunas S.R."/>
            <person name="Rosteck P.R. Jr."/>
            <person name="Skatrud P.L."/>
            <person name="Glass J.I."/>
        </authorList>
    </citation>
    <scope>NUCLEOTIDE SEQUENCE [LARGE SCALE GENOMIC DNA]</scope>
    <source>
        <strain>ATCC BAA-255 / R6</strain>
    </source>
</reference>
<organism>
    <name type="scientific">Streptococcus pneumoniae (strain ATCC BAA-255 / R6)</name>
    <dbReference type="NCBI Taxonomy" id="171101"/>
    <lineage>
        <taxon>Bacteria</taxon>
        <taxon>Bacillati</taxon>
        <taxon>Bacillota</taxon>
        <taxon>Bacilli</taxon>
        <taxon>Lactobacillales</taxon>
        <taxon>Streptococcaceae</taxon>
        <taxon>Streptococcus</taxon>
    </lineage>
</organism>
<proteinExistence type="inferred from homology"/>
<dbReference type="EMBL" id="AE007317">
    <property type="protein sequence ID" value="AAL00746.1"/>
    <property type="molecule type" value="Genomic_DNA"/>
</dbReference>
<dbReference type="PIR" id="E98114">
    <property type="entry name" value="E98114"/>
</dbReference>
<dbReference type="RefSeq" id="NP_359535.1">
    <property type="nucleotide sequence ID" value="NC_003098.1"/>
</dbReference>
<dbReference type="SMR" id="P61361"/>
<dbReference type="STRING" id="171101.spr1944"/>
<dbReference type="KEGG" id="spr:spr1944"/>
<dbReference type="PATRIC" id="fig|171101.6.peg.2099"/>
<dbReference type="eggNOG" id="COG0267">
    <property type="taxonomic scope" value="Bacteria"/>
</dbReference>
<dbReference type="HOGENOM" id="CLU_190949_3_2_9"/>
<dbReference type="PRO" id="PR:P61361"/>
<dbReference type="Proteomes" id="UP000000586">
    <property type="component" value="Chromosome"/>
</dbReference>
<dbReference type="GO" id="GO:0005737">
    <property type="term" value="C:cytoplasm"/>
    <property type="evidence" value="ECO:0007669"/>
    <property type="project" value="UniProtKB-ARBA"/>
</dbReference>
<dbReference type="GO" id="GO:1990904">
    <property type="term" value="C:ribonucleoprotein complex"/>
    <property type="evidence" value="ECO:0007669"/>
    <property type="project" value="UniProtKB-KW"/>
</dbReference>
<dbReference type="GO" id="GO:0005840">
    <property type="term" value="C:ribosome"/>
    <property type="evidence" value="ECO:0007669"/>
    <property type="project" value="UniProtKB-KW"/>
</dbReference>
<dbReference type="GO" id="GO:0003735">
    <property type="term" value="F:structural constituent of ribosome"/>
    <property type="evidence" value="ECO:0007669"/>
    <property type="project" value="InterPro"/>
</dbReference>
<dbReference type="GO" id="GO:0006412">
    <property type="term" value="P:translation"/>
    <property type="evidence" value="ECO:0007669"/>
    <property type="project" value="UniProtKB-UniRule"/>
</dbReference>
<dbReference type="Gene3D" id="2.20.28.120">
    <property type="entry name" value="Ribosomal protein L33"/>
    <property type="match status" value="1"/>
</dbReference>
<dbReference type="HAMAP" id="MF_00294">
    <property type="entry name" value="Ribosomal_bL33"/>
    <property type="match status" value="1"/>
</dbReference>
<dbReference type="InterPro" id="IPR001705">
    <property type="entry name" value="Ribosomal_bL33"/>
</dbReference>
<dbReference type="InterPro" id="IPR018264">
    <property type="entry name" value="Ribosomal_bL33_CS"/>
</dbReference>
<dbReference type="InterPro" id="IPR038584">
    <property type="entry name" value="Ribosomal_bL33_sf"/>
</dbReference>
<dbReference type="InterPro" id="IPR011332">
    <property type="entry name" value="Ribosomal_zn-bd"/>
</dbReference>
<dbReference type="NCBIfam" id="NF001764">
    <property type="entry name" value="PRK00504.1"/>
    <property type="match status" value="1"/>
</dbReference>
<dbReference type="NCBIfam" id="NF001860">
    <property type="entry name" value="PRK00595.1"/>
    <property type="match status" value="1"/>
</dbReference>
<dbReference type="NCBIfam" id="TIGR01023">
    <property type="entry name" value="rpmG_bact"/>
    <property type="match status" value="1"/>
</dbReference>
<dbReference type="PANTHER" id="PTHR43168">
    <property type="entry name" value="50S RIBOSOMAL PROTEIN L33, CHLOROPLASTIC"/>
    <property type="match status" value="1"/>
</dbReference>
<dbReference type="PANTHER" id="PTHR43168:SF2">
    <property type="entry name" value="LARGE RIBOSOMAL SUBUNIT PROTEIN BL33C"/>
    <property type="match status" value="1"/>
</dbReference>
<dbReference type="Pfam" id="PF00471">
    <property type="entry name" value="Ribosomal_L33"/>
    <property type="match status" value="1"/>
</dbReference>
<dbReference type="SUPFAM" id="SSF57829">
    <property type="entry name" value="Zn-binding ribosomal proteins"/>
    <property type="match status" value="1"/>
</dbReference>
<dbReference type="PROSITE" id="PS00582">
    <property type="entry name" value="RIBOSOMAL_L33"/>
    <property type="match status" value="1"/>
</dbReference>
<evidence type="ECO:0000255" key="1">
    <source>
        <dbReference type="HAMAP-Rule" id="MF_00294"/>
    </source>
</evidence>
<accession>P61361</accession>
<accession>Q97NB6</accession>